<proteinExistence type="evidence at protein level"/>
<gene>
    <name type="primary">Med15</name>
    <name type="synonym">Pcqap</name>
</gene>
<evidence type="ECO:0000250" key="1"/>
<evidence type="ECO:0000255" key="2"/>
<evidence type="ECO:0000256" key="3">
    <source>
        <dbReference type="SAM" id="MobiDB-lite"/>
    </source>
</evidence>
<evidence type="ECO:0000305" key="4"/>
<evidence type="ECO:0007744" key="5">
    <source>
    </source>
</evidence>
<evidence type="ECO:0007744" key="6">
    <source>
    </source>
</evidence>
<comment type="function">
    <text evidence="1">Component of the Mediator complex, a coactivator involved in the regulated transcription of nearly all RNA polymerase II-dependent genes. Mediator functions as a bridge to convey information from gene-specific regulatory proteins to the basal RNA polymerase II transcription machinery. Mediator is recruited to promoters by direct interactions with regulatory proteins and serves as a scaffold for the assembly of a functional preinitiation complex with RNA polymerase II and the general transcription factors. Required for cholesterol-dependent gene regulation. Positively regulates the Nodal signaling pathway (By similarity).</text>
</comment>
<comment type="subunit">
    <text evidence="1">Component of the Mediator complex, which is composed of MED1, MED4, MED6, MED7, MED8, MED9, MED10, MED11, MED12, MED13, MED13L, MED14, MED15, MED16, MED17, MED18, MED19, MED20, MED21, MED22, MED23, MED24, MED25, MED26, MED27, MED29, MED30, MED31, CCNC, CDK8 and CDC2L6/CDK11. The MED12, MED13, CCNC and CDK8 subunits form a distinct module termed the CDK8 module. Mediator containing the CDK8 module is less active than Mediator lacking this module in supporting transcriptional activation. Individual preparations of the Mediator complex lacking one or more distinct subunits have been variously termed ARC, CRSP, DRIP, PC2, SMCC and TRAP. Interacts with SMAD2, SMAD3, SREBF1 and SREBF2. Interacts with WWTR1 (By similarity). Interacts with TRIM11 (By similarity).</text>
</comment>
<comment type="subcellular location">
    <subcellularLocation>
        <location evidence="1">Cytoplasm</location>
    </subcellularLocation>
    <subcellularLocation>
        <location evidence="1">Nucleus</location>
    </subcellularLocation>
</comment>
<comment type="developmental stage">
    <text>At 9.5 dpc ubiquitously expressed at low levels with slightly elevated levels in the pharyngeal arches and in the forelimb buds. At 10.5 dpc expression was more pronounced in the first and second pharyngeal arches, the nasal processes and the limb buds. At 11.5 dpc expression is high in frontonasal region, maxillary and mandibular processes of the first and second pharyngeal arch and developing fore and hindlimbs. From 11.5 dpc-12.5 dpc expression is seen in the distal parts of the developing limbs and in the facial region. At 12.5 dpc transcripts were found in the developing hair follicles of the vibrissae.</text>
</comment>
<comment type="PTM">
    <text evidence="1">Ubiquitinated by TRIM11, leading to proteasomal degradation.</text>
</comment>
<comment type="similarity">
    <text evidence="4">Belongs to the Mediator complex subunit 15 family.</text>
</comment>
<comment type="sequence caution" evidence="4">
    <conflict type="frameshift">
        <sequence resource="EMBL-CDS" id="AAK58424"/>
    </conflict>
</comment>
<keyword id="KW-0002">3D-structure</keyword>
<keyword id="KW-0010">Activator</keyword>
<keyword id="KW-0963">Cytoplasm</keyword>
<keyword id="KW-0488">Methylation</keyword>
<keyword id="KW-0539">Nucleus</keyword>
<keyword id="KW-0597">Phosphoprotein</keyword>
<keyword id="KW-1185">Reference proteome</keyword>
<keyword id="KW-0804">Transcription</keyword>
<keyword id="KW-0805">Transcription regulation</keyword>
<keyword id="KW-0832">Ubl conjugation</keyword>
<sequence length="789" mass="86607">MDVSGQETDWRSAAFRQKLVSQIEDAMRKAGVAHSKSSKDMESHVFLKAKTRDEYLSLVARLIIHFRDIHNKKSQASVSDPMNALQSLTGGPTPGAAGIGMPPRGPGQSLGGMGGLGAMGQPLPLSGQPPPGTSGMAPHGMAVVSTATPQTQLQLQQVALQQQQQQQQQQQFQQQQAALQQQQQQQQQQQQQQQFQAQQNAMQQQFQAVVQQQQLQQQQQQQHLIKLHHQSQQQQIQQQQLQRMAQLQLQQQQQQQQQQALQAQPPMQQPSMQQPQPPPSQALPQQLSQLHHPQHHQPPPQAQQSPIAQNQPPQIPPQSQSQPLVSQAQALPGPMLYAAQQQLKFVRAPMVVQQPQVQPQVQQVQPQVQPQAAVQAAQSAQMVAPGVQMIAEALAQGGMHVRARFPPTSTMSAGPSSSISLGGQPTTQVSQSSLTMLSSPSPGQQVQTPQSMPPPPQPSPQPGSQPNSNVSSGPAPSPSSFLPSPSPQPSQSPVTARTPQNFSVPSPGPLNTPVNPSSVMSPAGSSQAEEQQYLDKLKQLSKYIEPLRRMINKIDKNEDRKKDLSKMKSLLDILTDPSKRCPLKTLQKCEIALEKLKNDMAVPTPPPPPVLPTKQQDLCQPLLDAVLANIRSPVFNHSLYRTFVPAMMAIHGPPIVSPVVCSRKRRFEEDERQSIPNVLQGEVARLDPKFLVNLDPSHCSNNGTVHLICKLDDKDLPSVPPLELSVPADYPAQSPMWIDRQWQYDANPFLQSVHRCMTSRLLQLPDKHSVTALLNTWAQSIHQACLSAA</sequence>
<accession>Q924H2</accession>
<accession>G3X8S4</accession>
<name>MED15_MOUSE</name>
<organism>
    <name type="scientific">Mus musculus</name>
    <name type="common">Mouse</name>
    <dbReference type="NCBI Taxonomy" id="10090"/>
    <lineage>
        <taxon>Eukaryota</taxon>
        <taxon>Metazoa</taxon>
        <taxon>Chordata</taxon>
        <taxon>Craniata</taxon>
        <taxon>Vertebrata</taxon>
        <taxon>Euteleostomi</taxon>
        <taxon>Mammalia</taxon>
        <taxon>Eutheria</taxon>
        <taxon>Euarchontoglires</taxon>
        <taxon>Glires</taxon>
        <taxon>Rodentia</taxon>
        <taxon>Myomorpha</taxon>
        <taxon>Muroidea</taxon>
        <taxon>Muridae</taxon>
        <taxon>Murinae</taxon>
        <taxon>Mus</taxon>
        <taxon>Mus</taxon>
    </lineage>
</organism>
<feature type="chain" id="PRO_0000058265" description="Mediator of RNA polymerase II transcription subunit 15">
    <location>
        <begin position="1"/>
        <end position="789"/>
    </location>
</feature>
<feature type="region of interest" description="Interaction with SREBF1" evidence="1">
    <location>
        <begin position="9"/>
        <end position="73"/>
    </location>
</feature>
<feature type="region of interest" description="Disordered" evidence="3">
    <location>
        <begin position="88"/>
        <end position="140"/>
    </location>
</feature>
<feature type="region of interest" description="Disordered" evidence="3">
    <location>
        <begin position="257"/>
        <end position="326"/>
    </location>
</feature>
<feature type="region of interest" description="Disordered" evidence="3">
    <location>
        <begin position="404"/>
        <end position="531"/>
    </location>
</feature>
<feature type="short sequence motif" description="Nuclear localization signal" evidence="2">
    <location>
        <begin position="548"/>
        <end position="565"/>
    </location>
</feature>
<feature type="compositionally biased region" description="Low complexity" evidence="3">
    <location>
        <begin position="89"/>
        <end position="102"/>
    </location>
</feature>
<feature type="compositionally biased region" description="Gly residues" evidence="3">
    <location>
        <begin position="108"/>
        <end position="118"/>
    </location>
</feature>
<feature type="compositionally biased region" description="Low complexity" evidence="3">
    <location>
        <begin position="257"/>
        <end position="274"/>
    </location>
</feature>
<feature type="compositionally biased region" description="Low complexity" evidence="3">
    <location>
        <begin position="282"/>
        <end position="291"/>
    </location>
</feature>
<feature type="compositionally biased region" description="Low complexity" evidence="3">
    <location>
        <begin position="302"/>
        <end position="326"/>
    </location>
</feature>
<feature type="compositionally biased region" description="Polar residues" evidence="3">
    <location>
        <begin position="407"/>
        <end position="426"/>
    </location>
</feature>
<feature type="compositionally biased region" description="Low complexity" evidence="3">
    <location>
        <begin position="427"/>
        <end position="450"/>
    </location>
</feature>
<feature type="compositionally biased region" description="Pro residues" evidence="3">
    <location>
        <begin position="451"/>
        <end position="463"/>
    </location>
</feature>
<feature type="compositionally biased region" description="Low complexity" evidence="3">
    <location>
        <begin position="464"/>
        <end position="483"/>
    </location>
</feature>
<feature type="compositionally biased region" description="Polar residues" evidence="3">
    <location>
        <begin position="494"/>
        <end position="504"/>
    </location>
</feature>
<feature type="compositionally biased region" description="Polar residues" evidence="3">
    <location>
        <begin position="512"/>
        <end position="530"/>
    </location>
</feature>
<feature type="modified residue" description="Asymmetric dimethylarginine" evidence="6">
    <location>
        <position position="347"/>
    </location>
</feature>
<feature type="modified residue" description="Phosphothreonine" evidence="5">
    <location>
        <position position="604"/>
    </location>
</feature>
<feature type="sequence conflict" description="In Ref. 1; AAK58424." ref="1">
    <original>S</original>
    <variation>W</variation>
    <location>
        <position position="4"/>
    </location>
</feature>
<feature type="sequence conflict" description="In Ref. 1; AAK58424." ref="1">
    <original>Q</original>
    <variation>L</variation>
    <location>
        <position position="17"/>
    </location>
</feature>
<feature type="sequence conflict" description="In Ref. 1; AAK58424." ref="1">
    <original>A</original>
    <variation>T</variation>
    <location>
        <position position="147"/>
    </location>
</feature>
<feature type="sequence conflict" description="In Ref. 1; AAK58424." ref="1">
    <original>Q</original>
    <variation>R</variation>
    <location>
        <position position="166"/>
    </location>
</feature>
<feature type="sequence conflict" description="In Ref. 1; AAK58424." ref="1">
    <original>Q</original>
    <variation>R</variation>
    <location>
        <position position="327"/>
    </location>
</feature>
<reference key="1">
    <citation type="journal article" date="2001" name="Genomics">
        <title>Isolation and characterization of a novel gene from the DiGeorge chromosomal region that encodes for a mediator subunit.</title>
        <authorList>
            <person name="Berti L."/>
            <person name="Mittler G."/>
            <person name="Przemeck G.K.H."/>
            <person name="Stelzer G."/>
            <person name="Guenzler B."/>
            <person name="Amati F."/>
            <person name="Conti E."/>
            <person name="Dallapiccola B."/>
            <person name="Hrabe' de Angelis M."/>
            <person name="Novelli G."/>
            <person name="Meisterernst M."/>
        </authorList>
    </citation>
    <scope>NUCLEOTIDE SEQUENCE [MRNA]</scope>
    <source>
        <strain>C57BL/6J</strain>
    </source>
</reference>
<reference key="2">
    <citation type="journal article" date="2009" name="PLoS Biol.">
        <title>Lineage-specific biology revealed by a finished genome assembly of the mouse.</title>
        <authorList>
            <person name="Church D.M."/>
            <person name="Goodstadt L."/>
            <person name="Hillier L.W."/>
            <person name="Zody M.C."/>
            <person name="Goldstein S."/>
            <person name="She X."/>
            <person name="Bult C.J."/>
            <person name="Agarwala R."/>
            <person name="Cherry J.L."/>
            <person name="DiCuccio M."/>
            <person name="Hlavina W."/>
            <person name="Kapustin Y."/>
            <person name="Meric P."/>
            <person name="Maglott D."/>
            <person name="Birtle Z."/>
            <person name="Marques A.C."/>
            <person name="Graves T."/>
            <person name="Zhou S."/>
            <person name="Teague B."/>
            <person name="Potamousis K."/>
            <person name="Churas C."/>
            <person name="Place M."/>
            <person name="Herschleb J."/>
            <person name="Runnheim R."/>
            <person name="Forrest D."/>
            <person name="Amos-Landgraf J."/>
            <person name="Schwartz D.C."/>
            <person name="Cheng Z."/>
            <person name="Lindblad-Toh K."/>
            <person name="Eichler E.E."/>
            <person name="Ponting C.P."/>
        </authorList>
    </citation>
    <scope>NUCLEOTIDE SEQUENCE [LARGE SCALE GENOMIC DNA]</scope>
    <source>
        <strain>C57BL/6J</strain>
    </source>
</reference>
<reference key="3">
    <citation type="submission" date="2005-07" db="EMBL/GenBank/DDBJ databases">
        <authorList>
            <person name="Mural R.J."/>
            <person name="Adams M.D."/>
            <person name="Myers E.W."/>
            <person name="Smith H.O."/>
            <person name="Venter J.C."/>
        </authorList>
    </citation>
    <scope>NUCLEOTIDE SEQUENCE [LARGE SCALE GENOMIC DNA]</scope>
</reference>
<reference key="4">
    <citation type="journal article" date="2010" name="Cell">
        <title>A tissue-specific atlas of mouse protein phosphorylation and expression.</title>
        <authorList>
            <person name="Huttlin E.L."/>
            <person name="Jedrychowski M.P."/>
            <person name="Elias J.E."/>
            <person name="Goswami T."/>
            <person name="Rad R."/>
            <person name="Beausoleil S.A."/>
            <person name="Villen J."/>
            <person name="Haas W."/>
            <person name="Sowa M.E."/>
            <person name="Gygi S.P."/>
        </authorList>
    </citation>
    <scope>PHOSPHORYLATION [LARGE SCALE ANALYSIS] AT THR-604</scope>
    <scope>IDENTIFICATION BY MASS SPECTROMETRY [LARGE SCALE ANALYSIS]</scope>
    <source>
        <tissue>Kidney</tissue>
        <tissue>Pancreas</tissue>
        <tissue>Spleen</tissue>
    </source>
</reference>
<reference key="5">
    <citation type="journal article" date="2014" name="Mol. Cell. Proteomics">
        <title>Immunoaffinity enrichment and mass spectrometry analysis of protein methylation.</title>
        <authorList>
            <person name="Guo A."/>
            <person name="Gu H."/>
            <person name="Zhou J."/>
            <person name="Mulhern D."/>
            <person name="Wang Y."/>
            <person name="Lee K.A."/>
            <person name="Yang V."/>
            <person name="Aguiar M."/>
            <person name="Kornhauser J."/>
            <person name="Jia X."/>
            <person name="Ren J."/>
            <person name="Beausoleil S.A."/>
            <person name="Silva J.C."/>
            <person name="Vemulapalli V."/>
            <person name="Bedford M.T."/>
            <person name="Comb M.J."/>
        </authorList>
    </citation>
    <scope>METHYLATION [LARGE SCALE ANALYSIS] AT ARG-347</scope>
    <scope>IDENTIFICATION BY MASS SPECTROMETRY [LARGE SCALE ANALYSIS]</scope>
    <source>
        <tissue>Embryo</tissue>
    </source>
</reference>
<protein>
    <recommendedName>
        <fullName>Mediator of RNA polymerase II transcription subunit 15</fullName>
    </recommendedName>
    <alternativeName>
        <fullName>Mediator complex subunit 15</fullName>
    </alternativeName>
    <alternativeName>
        <fullName>Positive cofactor 2 glutamine/Q-rich-associated protein</fullName>
        <shortName>PC2 glutamine/Q-rich-associated protein</shortName>
        <shortName>mPcqap</shortName>
    </alternativeName>
</protein>
<dbReference type="EMBL" id="AF328770">
    <property type="protein sequence ID" value="AAK58424.1"/>
    <property type="status" value="ALT_FRAME"/>
    <property type="molecule type" value="mRNA"/>
</dbReference>
<dbReference type="EMBL" id="AC087802">
    <property type="status" value="NOT_ANNOTATED_CDS"/>
    <property type="molecule type" value="Genomic_DNA"/>
</dbReference>
<dbReference type="EMBL" id="AC115733">
    <property type="status" value="NOT_ANNOTATED_CDS"/>
    <property type="molecule type" value="Genomic_DNA"/>
</dbReference>
<dbReference type="EMBL" id="CH466521">
    <property type="protein sequence ID" value="EDK97476.1"/>
    <property type="molecule type" value="Genomic_DNA"/>
</dbReference>
<dbReference type="CCDS" id="CCDS37274.1"/>
<dbReference type="RefSeq" id="NP_291087.2">
    <property type="nucleotide sequence ID" value="NM_033609.3"/>
</dbReference>
<dbReference type="PDB" id="6W1S">
    <property type="method" value="EM"/>
    <property type="resolution" value="4.02 A"/>
    <property type="chains" value="J=620-786"/>
</dbReference>
<dbReference type="PDB" id="8T1I">
    <property type="method" value="EM"/>
    <property type="resolution" value="4.68 A"/>
    <property type="chains" value="J=1-789"/>
</dbReference>
<dbReference type="PDB" id="8T1L">
    <property type="method" value="EM"/>
    <property type="resolution" value="4.83 A"/>
    <property type="chains" value="J=1-789"/>
</dbReference>
<dbReference type="PDBsum" id="6W1S"/>
<dbReference type="PDBsum" id="8T1I"/>
<dbReference type="PDBsum" id="8T1L"/>
<dbReference type="BMRB" id="Q924H2"/>
<dbReference type="EMDB" id="EMD-21514"/>
<dbReference type="EMDB" id="EMD-40968"/>
<dbReference type="EMDB" id="EMD-40971"/>
<dbReference type="SMR" id="Q924H2"/>
<dbReference type="ComplexPortal" id="CPX-3264">
    <property type="entry name" value="Core mediator complex"/>
</dbReference>
<dbReference type="DIP" id="DIP-59237N"/>
<dbReference type="FunCoup" id="Q924H2">
    <property type="interactions" value="4369"/>
</dbReference>
<dbReference type="IntAct" id="Q924H2">
    <property type="interactions" value="5"/>
</dbReference>
<dbReference type="MINT" id="Q924H2"/>
<dbReference type="STRING" id="10090.ENSMUSP00000012259"/>
<dbReference type="GlyGen" id="Q924H2">
    <property type="glycosylation" value="2 sites, 1 O-linked glycan (1 site)"/>
</dbReference>
<dbReference type="iPTMnet" id="Q924H2"/>
<dbReference type="PhosphoSitePlus" id="Q924H2"/>
<dbReference type="PaxDb" id="10090-ENSMUSP00000012259"/>
<dbReference type="ProteomicsDB" id="293451"/>
<dbReference type="Pumba" id="Q924H2"/>
<dbReference type="Antibodypedia" id="282">
    <property type="antibodies" value="305 antibodies from 32 providers"/>
</dbReference>
<dbReference type="DNASU" id="94112"/>
<dbReference type="Ensembl" id="ENSMUST00000012259.9">
    <property type="protein sequence ID" value="ENSMUSP00000012259.8"/>
    <property type="gene ID" value="ENSMUSG00000012114.18"/>
</dbReference>
<dbReference type="GeneID" id="94112"/>
<dbReference type="KEGG" id="mmu:94112"/>
<dbReference type="UCSC" id="uc007yls.2">
    <property type="organism name" value="mouse"/>
</dbReference>
<dbReference type="AGR" id="MGI:2137379"/>
<dbReference type="CTD" id="51586"/>
<dbReference type="MGI" id="MGI:2137379">
    <property type="gene designation" value="Med15"/>
</dbReference>
<dbReference type="VEuPathDB" id="HostDB:ENSMUSG00000012114"/>
<dbReference type="eggNOG" id="KOG4274">
    <property type="taxonomic scope" value="Eukaryota"/>
</dbReference>
<dbReference type="GeneTree" id="ENSGT00730000111140"/>
<dbReference type="InParanoid" id="Q924H2"/>
<dbReference type="OMA" id="GPVPNQM"/>
<dbReference type="OrthoDB" id="10055322at2759"/>
<dbReference type="PhylomeDB" id="Q924H2"/>
<dbReference type="TreeFam" id="TF324988"/>
<dbReference type="BioGRID-ORCS" id="94112">
    <property type="hits" value="8 hits in 79 CRISPR screens"/>
</dbReference>
<dbReference type="ChiTaRS" id="Med15">
    <property type="organism name" value="mouse"/>
</dbReference>
<dbReference type="PRO" id="PR:Q924H2"/>
<dbReference type="Proteomes" id="UP000000589">
    <property type="component" value="Chromosome 16"/>
</dbReference>
<dbReference type="RNAct" id="Q924H2">
    <property type="molecule type" value="protein"/>
</dbReference>
<dbReference type="Bgee" id="ENSMUSG00000012114">
    <property type="expression patterns" value="Expressed in animal zygote and 252 other cell types or tissues"/>
</dbReference>
<dbReference type="ExpressionAtlas" id="Q924H2">
    <property type="expression patterns" value="baseline and differential"/>
</dbReference>
<dbReference type="GO" id="GO:0070847">
    <property type="term" value="C:core mediator complex"/>
    <property type="evidence" value="ECO:0000266"/>
    <property type="project" value="ComplexPortal"/>
</dbReference>
<dbReference type="GO" id="GO:0005737">
    <property type="term" value="C:cytoplasm"/>
    <property type="evidence" value="ECO:0007669"/>
    <property type="project" value="UniProtKB-SubCell"/>
</dbReference>
<dbReference type="GO" id="GO:0016592">
    <property type="term" value="C:mediator complex"/>
    <property type="evidence" value="ECO:0000304"/>
    <property type="project" value="MGI"/>
</dbReference>
<dbReference type="GO" id="GO:0005654">
    <property type="term" value="C:nucleoplasm"/>
    <property type="evidence" value="ECO:0000304"/>
    <property type="project" value="Reactome"/>
</dbReference>
<dbReference type="GO" id="GO:0005634">
    <property type="term" value="C:nucleus"/>
    <property type="evidence" value="ECO:0000266"/>
    <property type="project" value="ComplexPortal"/>
</dbReference>
<dbReference type="GO" id="GO:0003712">
    <property type="term" value="F:transcription coregulator activity"/>
    <property type="evidence" value="ECO:0007669"/>
    <property type="project" value="InterPro"/>
</dbReference>
<dbReference type="GO" id="GO:0032968">
    <property type="term" value="P:positive regulation of transcription elongation by RNA polymerase II"/>
    <property type="evidence" value="ECO:0000303"/>
    <property type="project" value="ComplexPortal"/>
</dbReference>
<dbReference type="GO" id="GO:0060261">
    <property type="term" value="P:positive regulation of transcription initiation by RNA polymerase II"/>
    <property type="evidence" value="ECO:0000303"/>
    <property type="project" value="ComplexPortal"/>
</dbReference>
<dbReference type="GO" id="GO:0051123">
    <property type="term" value="P:RNA polymerase II preinitiation complex assembly"/>
    <property type="evidence" value="ECO:0000303"/>
    <property type="project" value="ComplexPortal"/>
</dbReference>
<dbReference type="GO" id="GO:0035019">
    <property type="term" value="P:somatic stem cell population maintenance"/>
    <property type="evidence" value="ECO:0000315"/>
    <property type="project" value="MGI"/>
</dbReference>
<dbReference type="FunFam" id="1.10.246.20:FF:000002">
    <property type="entry name" value="Mediator of RNA polymerase II transcription subunit 15"/>
    <property type="match status" value="1"/>
</dbReference>
<dbReference type="Gene3D" id="1.10.246.20">
    <property type="entry name" value="Coactivator CBP, KIX domain"/>
    <property type="match status" value="1"/>
</dbReference>
<dbReference type="InterPro" id="IPR036529">
    <property type="entry name" value="KIX_dom_sf"/>
</dbReference>
<dbReference type="InterPro" id="IPR048386">
    <property type="entry name" value="Med15_C"/>
</dbReference>
<dbReference type="InterPro" id="IPR048385">
    <property type="entry name" value="Med15_central"/>
</dbReference>
<dbReference type="InterPro" id="IPR019087">
    <property type="entry name" value="Med15_N"/>
</dbReference>
<dbReference type="PANTHER" id="PTHR31804">
    <property type="entry name" value="MEDIATOR OF RNA POLYMERASE II TRANSCRIPTION SUBUNIT 15"/>
    <property type="match status" value="1"/>
</dbReference>
<dbReference type="PANTHER" id="PTHR31804:SF3">
    <property type="entry name" value="MEDIATOR OF RNA POLYMERASE II TRANSCRIPTION SUBUNIT 15"/>
    <property type="match status" value="1"/>
</dbReference>
<dbReference type="Pfam" id="PF21539">
    <property type="entry name" value="Med15_C"/>
    <property type="match status" value="1"/>
</dbReference>
<dbReference type="Pfam" id="PF21538">
    <property type="entry name" value="Med15_M"/>
    <property type="match status" value="1"/>
</dbReference>
<dbReference type="Pfam" id="PF09606">
    <property type="entry name" value="Med15_N"/>
    <property type="match status" value="1"/>
</dbReference>